<gene>
    <name type="primary">NMNAT2</name>
</gene>
<evidence type="ECO:0000250" key="1">
    <source>
        <dbReference type="UniProtKB" id="Q8BNJ3"/>
    </source>
</evidence>
<evidence type="ECO:0000250" key="2">
    <source>
        <dbReference type="UniProtKB" id="Q96T66"/>
    </source>
</evidence>
<evidence type="ECO:0000250" key="3">
    <source>
        <dbReference type="UniProtKB" id="Q9BZQ4"/>
    </source>
</evidence>
<evidence type="ECO:0000305" key="4"/>
<feature type="chain" id="PRO_0000328660" description="Nicotinamide/nicotinic acid mononucleotide adenylyltransferase 2">
    <location>
        <begin position="1"/>
        <end position="307"/>
    </location>
</feature>
<feature type="binding site" evidence="2">
    <location>
        <position position="16"/>
    </location>
    <ligand>
        <name>NAD(+)</name>
        <dbReference type="ChEBI" id="CHEBI:57540"/>
    </ligand>
</feature>
<feature type="binding site" evidence="2">
    <location>
        <position position="17"/>
    </location>
    <ligand>
        <name>NAD(+)</name>
        <dbReference type="ChEBI" id="CHEBI:57540"/>
    </ligand>
</feature>
<feature type="binding site" description="in other chain" evidence="2">
    <location>
        <position position="24"/>
    </location>
    <ligand>
        <name>ATP</name>
        <dbReference type="ChEBI" id="CHEBI:30616"/>
        <note>ligand shared between dimeric partners</note>
    </ligand>
</feature>
<feature type="binding site" evidence="2">
    <location>
        <position position="92"/>
    </location>
    <ligand>
        <name>NAD(+)</name>
        <dbReference type="ChEBI" id="CHEBI:57540"/>
    </ligand>
</feature>
<feature type="binding site" evidence="2">
    <location>
        <position position="95"/>
    </location>
    <ligand>
        <name>NAD(+)</name>
        <dbReference type="ChEBI" id="CHEBI:57540"/>
    </ligand>
</feature>
<feature type="binding site" evidence="2">
    <location>
        <position position="200"/>
    </location>
    <ligand>
        <name>NAD(+)</name>
        <dbReference type="ChEBI" id="CHEBI:57540"/>
    </ligand>
</feature>
<feature type="binding site" evidence="2">
    <location>
        <position position="202"/>
    </location>
    <ligand>
        <name>NAD(+)</name>
        <dbReference type="ChEBI" id="CHEBI:57540"/>
    </ligand>
</feature>
<feature type="binding site" evidence="2">
    <location>
        <position position="212"/>
    </location>
    <ligand>
        <name>NAD(+)</name>
        <dbReference type="ChEBI" id="CHEBI:57540"/>
    </ligand>
</feature>
<feature type="binding site" evidence="2">
    <location>
        <position position="213"/>
    </location>
    <ligand>
        <name>NAD(+)</name>
        <dbReference type="ChEBI" id="CHEBI:57540"/>
    </ligand>
</feature>
<feature type="binding site" evidence="2">
    <location>
        <position position="232"/>
    </location>
    <ligand>
        <name>NAD(+)</name>
        <dbReference type="ChEBI" id="CHEBI:57540"/>
    </ligand>
</feature>
<feature type="binding site" description="in other chain" evidence="2">
    <location>
        <begin position="271"/>
        <end position="274"/>
    </location>
    <ligand>
        <name>ATP</name>
        <dbReference type="ChEBI" id="CHEBI:30616"/>
        <note>ligand shared between dimeric partners</note>
    </ligand>
</feature>
<feature type="lipid moiety-binding region" description="S-palmitoyl cysteine" evidence="1">
    <location>
        <position position="164"/>
    </location>
</feature>
<feature type="lipid moiety-binding region" description="S-palmitoyl cysteine" evidence="1">
    <location>
        <position position="165"/>
    </location>
</feature>
<dbReference type="EC" id="2.7.7.1" evidence="3"/>
<dbReference type="EC" id="2.7.7.18" evidence="3"/>
<dbReference type="EMBL" id="BC120344">
    <property type="protein sequence ID" value="AAI20345.1"/>
    <property type="molecule type" value="mRNA"/>
</dbReference>
<dbReference type="RefSeq" id="NP_001068954.1">
    <property type="nucleotide sequence ID" value="NM_001075486.1"/>
</dbReference>
<dbReference type="RefSeq" id="XP_015330742.1">
    <property type="nucleotide sequence ID" value="XM_015475256.3"/>
</dbReference>
<dbReference type="SMR" id="Q0VC59"/>
<dbReference type="FunCoup" id="Q0VC59">
    <property type="interactions" value="821"/>
</dbReference>
<dbReference type="STRING" id="9913.ENSBTAP00000060736"/>
<dbReference type="PaxDb" id="9913-ENSBTAP00000001052"/>
<dbReference type="GeneID" id="511042"/>
<dbReference type="KEGG" id="bta:511042"/>
<dbReference type="CTD" id="23057"/>
<dbReference type="VEuPathDB" id="HostDB:ENSBTAG00000000795"/>
<dbReference type="eggNOG" id="KOG3199">
    <property type="taxonomic scope" value="Eukaryota"/>
</dbReference>
<dbReference type="HOGENOM" id="CLU_033366_1_0_1"/>
<dbReference type="InParanoid" id="Q0VC59"/>
<dbReference type="OMA" id="QPWKENI"/>
<dbReference type="OrthoDB" id="422187at2759"/>
<dbReference type="TreeFam" id="TF315035"/>
<dbReference type="Reactome" id="R-BTA-196807">
    <property type="pathway name" value="Nicotinate metabolism"/>
</dbReference>
<dbReference type="UniPathway" id="UPA00253">
    <property type="reaction ID" value="UER00332"/>
</dbReference>
<dbReference type="UniPathway" id="UPA00253">
    <property type="reaction ID" value="UER00600"/>
</dbReference>
<dbReference type="Proteomes" id="UP000009136">
    <property type="component" value="Chromosome 16"/>
</dbReference>
<dbReference type="Bgee" id="ENSBTAG00000000795">
    <property type="expression patterns" value="Expressed in prefrontal cortex and 104 other cell types or tissues"/>
</dbReference>
<dbReference type="GO" id="GO:0030424">
    <property type="term" value="C:axon"/>
    <property type="evidence" value="ECO:0007669"/>
    <property type="project" value="UniProtKB-SubCell"/>
</dbReference>
<dbReference type="GO" id="GO:0030659">
    <property type="term" value="C:cytoplasmic vesicle membrane"/>
    <property type="evidence" value="ECO:0007669"/>
    <property type="project" value="UniProtKB-SubCell"/>
</dbReference>
<dbReference type="GO" id="GO:0005794">
    <property type="term" value="C:Golgi apparatus"/>
    <property type="evidence" value="ECO:0000318"/>
    <property type="project" value="GO_Central"/>
</dbReference>
<dbReference type="GO" id="GO:0000139">
    <property type="term" value="C:Golgi membrane"/>
    <property type="evidence" value="ECO:0007669"/>
    <property type="project" value="UniProtKB-SubCell"/>
</dbReference>
<dbReference type="GO" id="GO:0005524">
    <property type="term" value="F:ATP binding"/>
    <property type="evidence" value="ECO:0007669"/>
    <property type="project" value="UniProtKB-KW"/>
</dbReference>
<dbReference type="GO" id="GO:0000309">
    <property type="term" value="F:nicotinamide-nucleotide adenylyltransferase activity"/>
    <property type="evidence" value="ECO:0000318"/>
    <property type="project" value="GO_Central"/>
</dbReference>
<dbReference type="GO" id="GO:0004515">
    <property type="term" value="F:nicotinate-nucleotide adenylyltransferase activity"/>
    <property type="evidence" value="ECO:0000318"/>
    <property type="project" value="GO_Central"/>
</dbReference>
<dbReference type="GO" id="GO:0140768">
    <property type="term" value="F:protein ADP-ribosyltransferase-substrate adaptor activity"/>
    <property type="evidence" value="ECO:0000250"/>
    <property type="project" value="UniProtKB"/>
</dbReference>
<dbReference type="GO" id="GO:0009435">
    <property type="term" value="P:NAD biosynthetic process"/>
    <property type="evidence" value="ECO:0000318"/>
    <property type="project" value="GO_Central"/>
</dbReference>
<dbReference type="CDD" id="cd09286">
    <property type="entry name" value="NMNAT_Eukarya"/>
    <property type="match status" value="1"/>
</dbReference>
<dbReference type="FunFam" id="3.40.50.620:FF:000080">
    <property type="entry name" value="Nicotinamide/nicotinic acid mononucleotide adenylyltransferase 2"/>
    <property type="match status" value="1"/>
</dbReference>
<dbReference type="Gene3D" id="3.40.50.620">
    <property type="entry name" value="HUPs"/>
    <property type="match status" value="1"/>
</dbReference>
<dbReference type="InterPro" id="IPR004821">
    <property type="entry name" value="Cyt_trans-like"/>
</dbReference>
<dbReference type="InterPro" id="IPR051182">
    <property type="entry name" value="Euk_NMN_adenylyltrnsfrase"/>
</dbReference>
<dbReference type="InterPro" id="IPR045094">
    <property type="entry name" value="NMNAT_euk"/>
</dbReference>
<dbReference type="InterPro" id="IPR014729">
    <property type="entry name" value="Rossmann-like_a/b/a_fold"/>
</dbReference>
<dbReference type="PANTHER" id="PTHR12039">
    <property type="entry name" value="NICOTINAMIDE MONONUCLEOTIDE ADENYLYLTRANSFERASE"/>
    <property type="match status" value="1"/>
</dbReference>
<dbReference type="PANTHER" id="PTHR12039:SF18">
    <property type="entry name" value="NICOTINAMIDE_NICOTINIC ACID MONONUCLEOTIDE ADENYLYLTRANSFERASE 2"/>
    <property type="match status" value="1"/>
</dbReference>
<dbReference type="Pfam" id="PF01467">
    <property type="entry name" value="CTP_transf_like"/>
    <property type="match status" value="1"/>
</dbReference>
<dbReference type="SUPFAM" id="SSF52374">
    <property type="entry name" value="Nucleotidylyl transferase"/>
    <property type="match status" value="1"/>
</dbReference>
<organism>
    <name type="scientific">Bos taurus</name>
    <name type="common">Bovine</name>
    <dbReference type="NCBI Taxonomy" id="9913"/>
    <lineage>
        <taxon>Eukaryota</taxon>
        <taxon>Metazoa</taxon>
        <taxon>Chordata</taxon>
        <taxon>Craniata</taxon>
        <taxon>Vertebrata</taxon>
        <taxon>Euteleostomi</taxon>
        <taxon>Mammalia</taxon>
        <taxon>Eutheria</taxon>
        <taxon>Laurasiatheria</taxon>
        <taxon>Artiodactyla</taxon>
        <taxon>Ruminantia</taxon>
        <taxon>Pecora</taxon>
        <taxon>Bovidae</taxon>
        <taxon>Bovinae</taxon>
        <taxon>Bos</taxon>
    </lineage>
</organism>
<protein>
    <recommendedName>
        <fullName evidence="4">Nicotinamide/nicotinic acid mononucleotide adenylyltransferase 2</fullName>
        <shortName>NMN/NaMN adenylyltransferase 2</shortName>
        <ecNumber evidence="3">2.7.7.1</ecNumber>
        <ecNumber evidence="3">2.7.7.18</ecNumber>
    </recommendedName>
    <alternativeName>
        <fullName>Nicotinamide mononucleotide adenylyltransferase 2</fullName>
        <shortName>NMN adenylyltransferase 2</shortName>
    </alternativeName>
    <alternativeName>
        <fullName>Nicotinate-nucleotide adenylyltransferase 2</fullName>
        <shortName>NaMN adenylyltransferase 2</shortName>
    </alternativeName>
</protein>
<accession>Q0VC59</accession>
<keyword id="KW-0067">ATP-binding</keyword>
<keyword id="KW-0966">Cell projection</keyword>
<keyword id="KW-0963">Cytoplasm</keyword>
<keyword id="KW-0968">Cytoplasmic vesicle</keyword>
<keyword id="KW-0333">Golgi apparatus</keyword>
<keyword id="KW-0449">Lipoprotein</keyword>
<keyword id="KW-0472">Membrane</keyword>
<keyword id="KW-0520">NAD</keyword>
<keyword id="KW-0547">Nucleotide-binding</keyword>
<keyword id="KW-0548">Nucleotidyltransferase</keyword>
<keyword id="KW-0564">Palmitate</keyword>
<keyword id="KW-0662">Pyridine nucleotide biosynthesis</keyword>
<keyword id="KW-1185">Reference proteome</keyword>
<keyword id="KW-0808">Transferase</keyword>
<keyword id="KW-0832">Ubl conjugation</keyword>
<comment type="function">
    <text evidence="1 3">Nicotinamide/nicotinate-nucleotide adenylyltransferase that acts as an axon maintenance factor (By similarity). Axon survival factor required for the maintenance of healthy axons: acts by delaying Wallerian axon degeneration, an evolutionarily conserved process that drives the loss of damaged axons (By similarity). Catalyzes the formation of NAD(+) from nicotinamide mononucleotide (NMN) and ATP. Can also use the deamidated form; nicotinic acid mononucleotide (NaMN) as substrate but with a lower efficiency. Cannot use triazofurin monophosphate (TrMP) as substrate. Also catalyzes the reverse reaction, i.e. the pyrophosphorolytic cleavage of NAD(+). For the pyrophosphorolytic activity prefers NAD(+), NADH and NaAD as substrates and degrades nicotinic acid adenine dinucleotide phosphate (NHD) less effectively. Fails to cleave phosphorylated dinucleotides NADP(+), NADPH and NaADP(+). Also acts as an activator of ADP-ribosylation by supporting the catalytic activity of PARP16 and promoting mono-ADP-ribosylation of ribosomes by PARP16 (By similarity). May be involved in the maintenance of axonal integrity (By similarity).</text>
</comment>
<comment type="catalytic activity">
    <reaction evidence="3">
        <text>beta-nicotinamide D-ribonucleotide + ATP + H(+) = diphosphate + NAD(+)</text>
        <dbReference type="Rhea" id="RHEA:21360"/>
        <dbReference type="ChEBI" id="CHEBI:14649"/>
        <dbReference type="ChEBI" id="CHEBI:15378"/>
        <dbReference type="ChEBI" id="CHEBI:30616"/>
        <dbReference type="ChEBI" id="CHEBI:33019"/>
        <dbReference type="ChEBI" id="CHEBI:57540"/>
        <dbReference type="EC" id="2.7.7.1"/>
    </reaction>
    <physiologicalReaction direction="left-to-right" evidence="3">
        <dbReference type="Rhea" id="RHEA:21361"/>
    </physiologicalReaction>
    <physiologicalReaction direction="right-to-left" evidence="3">
        <dbReference type="Rhea" id="RHEA:21362"/>
    </physiologicalReaction>
</comment>
<comment type="catalytic activity">
    <reaction evidence="3">
        <text>nicotinate beta-D-ribonucleotide + ATP + H(+) = deamido-NAD(+) + diphosphate</text>
        <dbReference type="Rhea" id="RHEA:22860"/>
        <dbReference type="ChEBI" id="CHEBI:15378"/>
        <dbReference type="ChEBI" id="CHEBI:30616"/>
        <dbReference type="ChEBI" id="CHEBI:33019"/>
        <dbReference type="ChEBI" id="CHEBI:57502"/>
        <dbReference type="ChEBI" id="CHEBI:58437"/>
        <dbReference type="EC" id="2.7.7.18"/>
    </reaction>
    <physiologicalReaction direction="left-to-right" evidence="3">
        <dbReference type="Rhea" id="RHEA:22861"/>
    </physiologicalReaction>
    <physiologicalReaction direction="right-to-left" evidence="3">
        <dbReference type="Rhea" id="RHEA:22862"/>
    </physiologicalReaction>
</comment>
<comment type="cofactor">
    <cofactor evidence="3">
        <name>Mg(2+)</name>
        <dbReference type="ChEBI" id="CHEBI:18420"/>
    </cofactor>
    <text evidence="3">Divalent metal cations. Mg(2+) confers the highest activity.</text>
</comment>
<comment type="activity regulation">
    <text evidence="3">Inhibited by P1-(adenosine-5')-P3-(nicotinamide-riboside-5')-triphosphate (Np3AD) and P1-(adenosine-5')-P4-(nicotinamide-riboside-5')-tetraphosphate (Np4AD).</text>
</comment>
<comment type="pathway">
    <text evidence="3">Cofactor biosynthesis; NAD(+) biosynthesis; NAD(+) from nicotinamide D-ribonucleotide: step 1/1.</text>
</comment>
<comment type="pathway">
    <text evidence="3">Cofactor biosynthesis; NAD(+) biosynthesis; deamido-NAD(+) from nicotinate D-ribonucleotide: step 1/1.</text>
</comment>
<comment type="subunit">
    <text evidence="3">Monomer.</text>
</comment>
<comment type="subcellular location">
    <subcellularLocation>
        <location evidence="1">Golgi apparatus membrane</location>
        <topology evidence="1">Lipid-anchor</topology>
    </subcellularLocation>
    <subcellularLocation>
        <location evidence="1">Cytoplasmic vesicle membrane</location>
        <topology evidence="1">Lipid-anchor</topology>
    </subcellularLocation>
    <subcellularLocation>
        <location evidence="3">Cytoplasm</location>
    </subcellularLocation>
    <subcellularLocation>
        <location evidence="1">Cell projection</location>
        <location evidence="1">Axon</location>
    </subcellularLocation>
    <text evidence="1">Delivered to axons with Golgi-derived cytoplasmic vesicles.</text>
</comment>
<comment type="PTM">
    <text evidence="1 3">Degraded in response to injured neurite (By similarity). Degradation is caused by polyubiquitination by MYCBP2 after recognition by FBXO45 (By similarity).</text>
</comment>
<comment type="PTM">
    <text evidence="1">Palmitoylated; palmitoylation is required for membrane association.</text>
</comment>
<comment type="similarity">
    <text evidence="4">Belongs to the eukaryotic NMN adenylyltransferase family.</text>
</comment>
<sequence>MTETTKTHVILLACGSFNPITKGHIQMFERARDYLHKTGRFIVIGGIVSPVHDSYGKQGLVSSRHRLIMCQLAVQNSDWIRVDPWECYQDTWQTTCSVLEHHRDLMKRVTGCILSNVNTPSMTPVIGQPRNETSQPIYQNNNAPSKPTAAKILGKVGESLSRICCVRPPVERFTFVDENANLGTVMRYEEIELRILLLCGSDLLESFCIPGLWNEADMEVIVGDFGIVVVPRDAADTDRIMNHSSILRKYKNNIMVVKDDINHPMSVVSSTKSRLALQHGDGHVVDYLSQPVIDYILKSQLYINASG</sequence>
<reference key="1">
    <citation type="submission" date="2006-08" db="EMBL/GenBank/DDBJ databases">
        <authorList>
            <consortium name="NIH - Mammalian Gene Collection (MGC) project"/>
        </authorList>
    </citation>
    <scope>NUCLEOTIDE SEQUENCE [LARGE SCALE MRNA]</scope>
    <source>
        <strain>Hereford</strain>
        <tissue>Brain cortex</tissue>
    </source>
</reference>
<proteinExistence type="evidence at transcript level"/>
<name>NMNA2_BOVIN</name>